<organism>
    <name type="scientific">Eumenes pomiformis</name>
    <name type="common">Potter wasp</name>
    <name type="synonym">Vespa pomiformis</name>
    <dbReference type="NCBI Taxonomy" id="693051"/>
    <lineage>
        <taxon>Eukaryota</taxon>
        <taxon>Metazoa</taxon>
        <taxon>Ecdysozoa</taxon>
        <taxon>Arthropoda</taxon>
        <taxon>Hexapoda</taxon>
        <taxon>Insecta</taxon>
        <taxon>Pterygota</taxon>
        <taxon>Neoptera</taxon>
        <taxon>Endopterygota</taxon>
        <taxon>Hymenoptera</taxon>
        <taxon>Apocrita</taxon>
        <taxon>Aculeata</taxon>
        <taxon>Vespoidea</taxon>
        <taxon>Vespidae</taxon>
        <taxon>Eumeninae</taxon>
        <taxon>Eumenes</taxon>
    </lineage>
</organism>
<sequence length="52" mass="5142">MRSAILLVIVAIVAILGFLGVNAEPLPSPLAEPNPHAKAAPLSPAAMASLAG</sequence>
<dbReference type="EMBL" id="GU136236">
    <property type="protein sequence ID" value="ACZ37397.1"/>
    <property type="molecule type" value="mRNA"/>
</dbReference>
<dbReference type="SMR" id="D1MEJ1"/>
<dbReference type="GO" id="GO:0005576">
    <property type="term" value="C:extracellular region"/>
    <property type="evidence" value="ECO:0007669"/>
    <property type="project" value="UniProtKB-SubCell"/>
</dbReference>
<dbReference type="GO" id="GO:0090729">
    <property type="term" value="F:toxin activity"/>
    <property type="evidence" value="ECO:0007669"/>
    <property type="project" value="UniProtKB-KW"/>
</dbReference>
<name>SVIPB_EUMPO</name>
<evidence type="ECO:0000255" key="1"/>
<evidence type="ECO:0000256" key="2">
    <source>
        <dbReference type="SAM" id="MobiDB-lite"/>
    </source>
</evidence>
<evidence type="ECO:0000269" key="3">
    <source>
    </source>
</evidence>
<evidence type="ECO:0000303" key="4">
    <source>
    </source>
</evidence>
<evidence type="ECO:0000305" key="5"/>
<evidence type="ECO:0000305" key="6">
    <source>
    </source>
</evidence>
<evidence type="ECO:0000305" key="7">
    <source>
    </source>
</evidence>
<evidence type="ECO:0000312" key="8">
    <source>
        <dbReference type="EMBL" id="ACZ37397.1"/>
    </source>
</evidence>
<comment type="subcellular location">
    <subcellularLocation>
        <location evidence="6">Secreted</location>
    </subcellularLocation>
    <text evidence="7">Has a coil conformation.</text>
</comment>
<comment type="tissue specificity">
    <text evidence="6">Expressed by the venom gland.</text>
</comment>
<comment type="miscellaneous">
    <text evidence="6">Not found in venom, suggesting that it is a minor component.</text>
</comment>
<comment type="miscellaneous">
    <text evidence="3">Negative results: Has no activity against fungi (B.cinerea and C.albicans) and bacteria (E.coli and S.aureus) (PubMed:21184791). Has no hemolytic activity against human erythrocytes (PubMed:21184791). Does not show cytolytic activity against insect cell lines (PubMed:21184791). Does not induce feeding disorder in lepidopteran larvae after peptide injection in the vicinity of the head and thorax (PubMed:21184791).</text>
</comment>
<reference key="1">
    <citation type="journal article" date="2010" name="Toxicon">
        <title>Differential gene expression profiles in the venom gland/sac of Eumenes pomiformis (Hymenoptera: Eumenidae).</title>
        <authorList>
            <person name="Baek J.H."/>
            <person name="Lee S.H."/>
        </authorList>
    </citation>
    <scope>NUCLEOTIDE SEQUENCE [MRNA]</scope>
    <scope>PROBABLE AMIDATION AT ALA-51</scope>
    <source>
        <tissue>Venom gland</tissue>
    </source>
</reference>
<reference key="2">
    <citation type="journal article" date="2011" name="Peptides">
        <title>Venom peptides from solitary hunting wasps induce feeding disorder in lepidopteran larvae.</title>
        <authorList>
            <person name="Baek J.H."/>
            <person name="Ji Y."/>
            <person name="Shin J.S."/>
            <person name="Lee S."/>
            <person name="Lee S.H."/>
        </authorList>
    </citation>
    <scope>SYNTHESIS OF 42-51</scope>
</reference>
<keyword id="KW-0027">Amidation</keyword>
<keyword id="KW-0677">Repeat</keyword>
<keyword id="KW-0964">Secreted</keyword>
<keyword id="KW-0732">Signal</keyword>
<keyword id="KW-0800">Toxin</keyword>
<accession>D1MEJ1</accession>
<proteinExistence type="evidence at protein level"/>
<feature type="signal peptide" evidence="1">
    <location>
        <begin position="1"/>
        <end position="23"/>
    </location>
</feature>
<feature type="propeptide" id="PRO_0000453655" evidence="6">
    <location>
        <begin position="24"/>
        <end position="41"/>
    </location>
</feature>
<feature type="peptide" id="PRO_5003024973" description="Venom peptide 4b" evidence="6">
    <location>
        <begin position="42"/>
        <end position="51"/>
    </location>
</feature>
<feature type="repeat" description="AXPX 1" evidence="5">
    <location>
        <begin position="23"/>
        <end position="26"/>
    </location>
</feature>
<feature type="repeat" description="AXPX 2" evidence="5">
    <location>
        <begin position="31"/>
        <end position="34"/>
    </location>
</feature>
<feature type="repeat" description="AXPX 3" evidence="5">
    <location>
        <begin position="39"/>
        <end position="42"/>
    </location>
</feature>
<feature type="region of interest" description="Disordered" evidence="2">
    <location>
        <begin position="30"/>
        <end position="52"/>
    </location>
</feature>
<feature type="compositionally biased region" description="Low complexity" evidence="2">
    <location>
        <begin position="37"/>
        <end position="52"/>
    </location>
</feature>
<feature type="modified residue" description="Alanine amide" evidence="6">
    <location>
        <position position="51"/>
    </location>
</feature>
<protein>
    <recommendedName>
        <fullName evidence="4">Venom peptide 4b</fullName>
        <shortName evidence="4">EpVP4b</shortName>
        <shortName evidence="8">VP4b</shortName>
    </recommendedName>
</protein>